<evidence type="ECO:0000255" key="1">
    <source>
        <dbReference type="HAMAP-Rule" id="MF_00652"/>
    </source>
</evidence>
<comment type="similarity">
    <text evidence="1">Belongs to the UPF0246 family.</text>
</comment>
<sequence length="258" mass="28876">MLVLVSPAKTLDFENPPLTTEHTRPTLLDQSQALIKECQKLTPVQIASLMKVSDKIAGLNAARFAQWQPNFTLGEAKQAIFAFRGDVYTGFDADSLSAAQLQSAQNHLRILSGLYGLLKPLDLILPYRLEMGTRLENAKGSNLYAFWGEIITDEVNRALIEQGDDIIVNLASNEYFKAVKEKSLKGRLVTPVFKDCKNGQYKVISFYAKKARGLMARFIIEQQPKDLTALISFDLDGYYYSEAQSTPSSPVFLRDEQV</sequence>
<reference key="1">
    <citation type="submission" date="2006-03" db="EMBL/GenBank/DDBJ databases">
        <title>Complete sequence of Shewanella denitrificans OS217.</title>
        <authorList>
            <consortium name="US DOE Joint Genome Institute"/>
            <person name="Copeland A."/>
            <person name="Lucas S."/>
            <person name="Lapidus A."/>
            <person name="Barry K."/>
            <person name="Detter J.C."/>
            <person name="Glavina del Rio T."/>
            <person name="Hammon N."/>
            <person name="Israni S."/>
            <person name="Dalin E."/>
            <person name="Tice H."/>
            <person name="Pitluck S."/>
            <person name="Brettin T."/>
            <person name="Bruce D."/>
            <person name="Han C."/>
            <person name="Tapia R."/>
            <person name="Gilna P."/>
            <person name="Kiss H."/>
            <person name="Schmutz J."/>
            <person name="Larimer F."/>
            <person name="Land M."/>
            <person name="Hauser L."/>
            <person name="Kyrpides N."/>
            <person name="Lykidis A."/>
            <person name="Richardson P."/>
        </authorList>
    </citation>
    <scope>NUCLEOTIDE SEQUENCE [LARGE SCALE GENOMIC DNA]</scope>
    <source>
        <strain>OS217 / ATCC BAA-1090 / DSM 15013</strain>
    </source>
</reference>
<dbReference type="EMBL" id="CP000302">
    <property type="protein sequence ID" value="ABE56008.1"/>
    <property type="molecule type" value="Genomic_DNA"/>
</dbReference>
<dbReference type="RefSeq" id="WP_011497158.1">
    <property type="nucleotide sequence ID" value="NC_007954.1"/>
</dbReference>
<dbReference type="SMR" id="Q12KL8"/>
<dbReference type="STRING" id="318161.Sden_2729"/>
<dbReference type="KEGG" id="sdn:Sden_2729"/>
<dbReference type="eggNOG" id="COG3022">
    <property type="taxonomic scope" value="Bacteria"/>
</dbReference>
<dbReference type="HOGENOM" id="CLU_061989_0_0_6"/>
<dbReference type="OrthoDB" id="9777133at2"/>
<dbReference type="Proteomes" id="UP000001982">
    <property type="component" value="Chromosome"/>
</dbReference>
<dbReference type="GO" id="GO:0005829">
    <property type="term" value="C:cytosol"/>
    <property type="evidence" value="ECO:0007669"/>
    <property type="project" value="TreeGrafter"/>
</dbReference>
<dbReference type="GO" id="GO:0033194">
    <property type="term" value="P:response to hydroperoxide"/>
    <property type="evidence" value="ECO:0007669"/>
    <property type="project" value="TreeGrafter"/>
</dbReference>
<dbReference type="HAMAP" id="MF_00652">
    <property type="entry name" value="UPF0246"/>
    <property type="match status" value="1"/>
</dbReference>
<dbReference type="InterPro" id="IPR005583">
    <property type="entry name" value="YaaA"/>
</dbReference>
<dbReference type="NCBIfam" id="NF002541">
    <property type="entry name" value="PRK02101.1-1"/>
    <property type="match status" value="1"/>
</dbReference>
<dbReference type="NCBIfam" id="NF002542">
    <property type="entry name" value="PRK02101.1-3"/>
    <property type="match status" value="1"/>
</dbReference>
<dbReference type="PANTHER" id="PTHR30283:SF4">
    <property type="entry name" value="PEROXIDE STRESS RESISTANCE PROTEIN YAAA"/>
    <property type="match status" value="1"/>
</dbReference>
<dbReference type="PANTHER" id="PTHR30283">
    <property type="entry name" value="PEROXIDE STRESS RESPONSE PROTEIN YAAA"/>
    <property type="match status" value="1"/>
</dbReference>
<dbReference type="Pfam" id="PF03883">
    <property type="entry name" value="H2O2_YaaD"/>
    <property type="match status" value="1"/>
</dbReference>
<organism>
    <name type="scientific">Shewanella denitrificans (strain OS217 / ATCC BAA-1090 / DSM 15013)</name>
    <dbReference type="NCBI Taxonomy" id="318161"/>
    <lineage>
        <taxon>Bacteria</taxon>
        <taxon>Pseudomonadati</taxon>
        <taxon>Pseudomonadota</taxon>
        <taxon>Gammaproteobacteria</taxon>
        <taxon>Alteromonadales</taxon>
        <taxon>Shewanellaceae</taxon>
        <taxon>Shewanella</taxon>
    </lineage>
</organism>
<accession>Q12KL8</accession>
<gene>
    <name type="ordered locus">Sden_2729</name>
</gene>
<feature type="chain" id="PRO_0000262056" description="UPF0246 protein Sden_2729">
    <location>
        <begin position="1"/>
        <end position="258"/>
    </location>
</feature>
<protein>
    <recommendedName>
        <fullName evidence="1">UPF0246 protein Sden_2729</fullName>
    </recommendedName>
</protein>
<keyword id="KW-1185">Reference proteome</keyword>
<proteinExistence type="inferred from homology"/>
<name>Y2729_SHEDO</name>